<name>YEJL_ECOSM</name>
<accession>B1LKT7</accession>
<sequence length="75" mass="8302">MPQISRYSDEQVEQLLAELLNILEKHKAPTDLSLMVLGNMVTNLINTSIAPAQRQAIANSFARALQSSINEDKAH</sequence>
<evidence type="ECO:0000255" key="1">
    <source>
        <dbReference type="HAMAP-Rule" id="MF_00816"/>
    </source>
</evidence>
<organism>
    <name type="scientific">Escherichia coli (strain SMS-3-5 / SECEC)</name>
    <dbReference type="NCBI Taxonomy" id="439855"/>
    <lineage>
        <taxon>Bacteria</taxon>
        <taxon>Pseudomonadati</taxon>
        <taxon>Pseudomonadota</taxon>
        <taxon>Gammaproteobacteria</taxon>
        <taxon>Enterobacterales</taxon>
        <taxon>Enterobacteriaceae</taxon>
        <taxon>Escherichia</taxon>
    </lineage>
</organism>
<gene>
    <name evidence="1" type="primary">yejL</name>
    <name type="ordered locus">EcSMS35_2337</name>
</gene>
<protein>
    <recommendedName>
        <fullName evidence="1">UPF0352 protein YejL</fullName>
    </recommendedName>
</protein>
<reference key="1">
    <citation type="journal article" date="2008" name="J. Bacteriol.">
        <title>Insights into the environmental resistance gene pool from the genome sequence of the multidrug-resistant environmental isolate Escherichia coli SMS-3-5.</title>
        <authorList>
            <person name="Fricke W.F."/>
            <person name="Wright M.S."/>
            <person name="Lindell A.H."/>
            <person name="Harkins D.M."/>
            <person name="Baker-Austin C."/>
            <person name="Ravel J."/>
            <person name="Stepanauskas R."/>
        </authorList>
    </citation>
    <scope>NUCLEOTIDE SEQUENCE [LARGE SCALE GENOMIC DNA]</scope>
    <source>
        <strain>SMS-3-5 / SECEC</strain>
    </source>
</reference>
<feature type="chain" id="PRO_1000199584" description="UPF0352 protein YejL">
    <location>
        <begin position="1"/>
        <end position="75"/>
    </location>
</feature>
<proteinExistence type="inferred from homology"/>
<comment type="similarity">
    <text evidence="1">Belongs to the UPF0352 family.</text>
</comment>
<dbReference type="EMBL" id="CP000970">
    <property type="protein sequence ID" value="ACB19370.1"/>
    <property type="molecule type" value="Genomic_DNA"/>
</dbReference>
<dbReference type="RefSeq" id="WP_001135664.1">
    <property type="nucleotide sequence ID" value="NC_010498.1"/>
</dbReference>
<dbReference type="BMRB" id="B1LKT7"/>
<dbReference type="SMR" id="B1LKT7"/>
<dbReference type="KEGG" id="ecm:EcSMS35_2337"/>
<dbReference type="HOGENOM" id="CLU_175457_0_0_6"/>
<dbReference type="Proteomes" id="UP000007011">
    <property type="component" value="Chromosome"/>
</dbReference>
<dbReference type="FunFam" id="1.10.3390.10:FF:000001">
    <property type="entry name" value="UPF0352 protein YejL"/>
    <property type="match status" value="1"/>
</dbReference>
<dbReference type="Gene3D" id="1.10.3390.10">
    <property type="entry name" value="YejL-like"/>
    <property type="match status" value="1"/>
</dbReference>
<dbReference type="HAMAP" id="MF_00816">
    <property type="entry name" value="UPF0352"/>
    <property type="match status" value="1"/>
</dbReference>
<dbReference type="InterPro" id="IPR009857">
    <property type="entry name" value="UPF0352"/>
</dbReference>
<dbReference type="InterPro" id="IPR023202">
    <property type="entry name" value="YejL_sf"/>
</dbReference>
<dbReference type="NCBIfam" id="NF010242">
    <property type="entry name" value="PRK13689.1"/>
    <property type="match status" value="1"/>
</dbReference>
<dbReference type="Pfam" id="PF07208">
    <property type="entry name" value="DUF1414"/>
    <property type="match status" value="1"/>
</dbReference>
<dbReference type="PIRSF" id="PIRSF006188">
    <property type="entry name" value="UCP006188"/>
    <property type="match status" value="1"/>
</dbReference>
<dbReference type="SUPFAM" id="SSF158651">
    <property type="entry name" value="YejL-like"/>
    <property type="match status" value="1"/>
</dbReference>